<feature type="chain" id="PRO_0000096150" description="Single-stranded DNA-binding protein">
    <location>
        <begin position="1"/>
        <end position="263"/>
    </location>
</feature>
<feature type="domain" description="SSB 1" evidence="1">
    <location>
        <begin position="5"/>
        <end position="108"/>
    </location>
</feature>
<feature type="domain" description="SSB 2" evidence="1">
    <location>
        <begin position="128"/>
        <end position="227"/>
    </location>
</feature>
<feature type="region of interest" description="Disordered" evidence="2">
    <location>
        <begin position="224"/>
        <end position="263"/>
    </location>
</feature>
<feature type="short sequence motif" description="Important for interaction with partner proteins" evidence="1">
    <location>
        <begin position="258"/>
        <end position="263"/>
    </location>
</feature>
<feature type="compositionally biased region" description="Acidic residues" evidence="2">
    <location>
        <begin position="247"/>
        <end position="263"/>
    </location>
</feature>
<feature type="sequence conflict" description="In Ref. 2; CAD92097." evidence="4" ref="2">
    <original>R</original>
    <variation>K</variation>
    <location>
        <position position="93"/>
    </location>
</feature>
<feature type="sequence conflict" description="In Ref. 2; CAD92097." evidence="4" ref="2">
    <original>V</original>
    <variation>A</variation>
    <location>
        <position position="241"/>
    </location>
</feature>
<feature type="sequence conflict" description="In Ref. 1 and 2." evidence="4" ref="1 2">
    <original>E</original>
    <variation>D</variation>
    <location>
        <position position="260"/>
    </location>
</feature>
<feature type="strand" evidence="5">
    <location>
        <begin position="5"/>
        <end position="16"/>
    </location>
</feature>
<feature type="strand" evidence="5">
    <location>
        <begin position="19"/>
        <end position="22"/>
    </location>
</feature>
<feature type="strand" evidence="5">
    <location>
        <begin position="28"/>
        <end position="39"/>
    </location>
</feature>
<feature type="strand" evidence="5">
    <location>
        <begin position="49"/>
        <end position="59"/>
    </location>
</feature>
<feature type="helix" evidence="5">
    <location>
        <begin position="60"/>
        <end position="64"/>
    </location>
</feature>
<feature type="turn" evidence="5">
    <location>
        <begin position="65"/>
        <end position="69"/>
    </location>
</feature>
<feature type="strand" evidence="5">
    <location>
        <begin position="75"/>
        <end position="85"/>
    </location>
</feature>
<feature type="strand" evidence="5">
    <location>
        <begin position="96"/>
        <end position="107"/>
    </location>
</feature>
<feature type="strand" evidence="5">
    <location>
        <begin position="114"/>
        <end position="116"/>
    </location>
</feature>
<feature type="strand" evidence="5">
    <location>
        <begin position="122"/>
        <end position="125"/>
    </location>
</feature>
<feature type="strand" evidence="5">
    <location>
        <begin position="128"/>
        <end position="139"/>
    </location>
</feature>
<feature type="strand" evidence="5">
    <location>
        <begin position="142"/>
        <end position="145"/>
    </location>
</feature>
<feature type="strand" evidence="5">
    <location>
        <begin position="151"/>
        <end position="161"/>
    </location>
</feature>
<feature type="strand" evidence="5">
    <location>
        <begin position="169"/>
        <end position="178"/>
    </location>
</feature>
<feature type="helix" evidence="5">
    <location>
        <begin position="179"/>
        <end position="185"/>
    </location>
</feature>
<feature type="strand" evidence="5">
    <location>
        <begin position="193"/>
        <end position="206"/>
    </location>
</feature>
<feature type="strand" evidence="5">
    <location>
        <begin position="208"/>
        <end position="210"/>
    </location>
</feature>
<feature type="strand" evidence="5">
    <location>
        <begin position="212"/>
        <end position="224"/>
    </location>
</feature>
<reference key="1">
    <citation type="journal article" date="2002" name="Microbiology">
        <title>Identification and characterization of single-stranded-DNA-binding proteins from Thermus thermophilus and Thermus aquaticus -- new arrangement of binding domains.</title>
        <authorList>
            <person name="Dabrowski S."/>
            <person name="Olszewski M."/>
            <person name="Piatek R."/>
            <person name="Brillowska-Dabrowska A."/>
            <person name="Konopa G."/>
            <person name="Kur J."/>
        </authorList>
    </citation>
    <scope>NUCLEOTIDE SEQUENCE [GENOMIC DNA]</scope>
    <scope>SUBUNIT</scope>
</reference>
<reference key="2">
    <citation type="submission" date="2003-05" db="EMBL/GenBank/DDBJ databases">
        <title>One step beyond PCR and RT-PCR: the SSB protein from Thermus thermophilus.</title>
        <authorList>
            <person name="Perales C."/>
            <person name="Cava F."/>
            <person name="Berenguer J."/>
        </authorList>
    </citation>
    <scope>NUCLEOTIDE SEQUENCE [GENOMIC DNA]</scope>
</reference>
<reference key="3">
    <citation type="submission" date="2004-11" db="EMBL/GenBank/DDBJ databases">
        <title>Complete genome sequence of Thermus thermophilus HB8.</title>
        <authorList>
            <person name="Masui R."/>
            <person name="Kurokawa K."/>
            <person name="Nakagawa N."/>
            <person name="Tokunaga F."/>
            <person name="Koyama Y."/>
            <person name="Shibata T."/>
            <person name="Oshima T."/>
            <person name="Yokoyama S."/>
            <person name="Yasunaga T."/>
            <person name="Kuramitsu S."/>
        </authorList>
    </citation>
    <scope>NUCLEOTIDE SEQUENCE [LARGE SCALE GENOMIC DNA]</scope>
    <source>
        <strain>ATCC 27634 / DSM 579 / HB8</strain>
    </source>
</reference>
<evidence type="ECO:0000255" key="1">
    <source>
        <dbReference type="HAMAP-Rule" id="MF_00984"/>
    </source>
</evidence>
<evidence type="ECO:0000256" key="2">
    <source>
        <dbReference type="SAM" id="MobiDB-lite"/>
    </source>
</evidence>
<evidence type="ECO:0000269" key="3">
    <source>
    </source>
</evidence>
<evidence type="ECO:0000305" key="4"/>
<evidence type="ECO:0007829" key="5">
    <source>
        <dbReference type="PDB" id="2CWA"/>
    </source>
</evidence>
<dbReference type="EMBL" id="AF079160">
    <property type="protein sequence ID" value="AAC28386.2"/>
    <property type="molecule type" value="Genomic_DNA"/>
</dbReference>
<dbReference type="EMBL" id="AJ564626">
    <property type="protein sequence ID" value="CAD92097.1"/>
    <property type="molecule type" value="Genomic_DNA"/>
</dbReference>
<dbReference type="EMBL" id="AP008226">
    <property type="protein sequence ID" value="BAD70067.1"/>
    <property type="molecule type" value="Genomic_DNA"/>
</dbReference>
<dbReference type="RefSeq" id="WP_011227803.1">
    <property type="nucleotide sequence ID" value="NC_006461.1"/>
</dbReference>
<dbReference type="RefSeq" id="YP_143510.1">
    <property type="nucleotide sequence ID" value="NC_006461.1"/>
</dbReference>
<dbReference type="PDB" id="2CWA">
    <property type="method" value="X-ray"/>
    <property type="resolution" value="1.96 A"/>
    <property type="chains" value="A=1-263"/>
</dbReference>
<dbReference type="PDBsum" id="2CWA"/>
<dbReference type="SMR" id="Q5SLP9"/>
<dbReference type="EnsemblBacteria" id="BAD70067">
    <property type="protein sequence ID" value="BAD70067"/>
    <property type="gene ID" value="BAD70067"/>
</dbReference>
<dbReference type="GeneID" id="3167973"/>
<dbReference type="KEGG" id="ttj:TTHA0244"/>
<dbReference type="PATRIC" id="fig|300852.9.peg.244"/>
<dbReference type="eggNOG" id="COG0629">
    <property type="taxonomic scope" value="Bacteria"/>
</dbReference>
<dbReference type="HOGENOM" id="CLU_087573_0_0_0"/>
<dbReference type="EvolutionaryTrace" id="Q5SLP9"/>
<dbReference type="Proteomes" id="UP000000532">
    <property type="component" value="Chromosome"/>
</dbReference>
<dbReference type="GO" id="GO:0009295">
    <property type="term" value="C:nucleoid"/>
    <property type="evidence" value="ECO:0007669"/>
    <property type="project" value="TreeGrafter"/>
</dbReference>
<dbReference type="GO" id="GO:0003697">
    <property type="term" value="F:single-stranded DNA binding"/>
    <property type="evidence" value="ECO:0007669"/>
    <property type="project" value="UniProtKB-UniRule"/>
</dbReference>
<dbReference type="GO" id="GO:0006310">
    <property type="term" value="P:DNA recombination"/>
    <property type="evidence" value="ECO:0007669"/>
    <property type="project" value="UniProtKB-UniRule"/>
</dbReference>
<dbReference type="GO" id="GO:0006281">
    <property type="term" value="P:DNA repair"/>
    <property type="evidence" value="ECO:0007669"/>
    <property type="project" value="UniProtKB-UniRule"/>
</dbReference>
<dbReference type="GO" id="GO:0006260">
    <property type="term" value="P:DNA replication"/>
    <property type="evidence" value="ECO:0007669"/>
    <property type="project" value="UniProtKB-UniRule"/>
</dbReference>
<dbReference type="CDD" id="cd04496">
    <property type="entry name" value="SSB_OBF"/>
    <property type="match status" value="2"/>
</dbReference>
<dbReference type="Gene3D" id="2.40.50.140">
    <property type="entry name" value="Nucleic acid-binding proteins"/>
    <property type="match status" value="2"/>
</dbReference>
<dbReference type="HAMAP" id="MF_00984">
    <property type="entry name" value="SSB"/>
    <property type="match status" value="1"/>
</dbReference>
<dbReference type="InterPro" id="IPR012340">
    <property type="entry name" value="NA-bd_OB-fold"/>
</dbReference>
<dbReference type="InterPro" id="IPR000424">
    <property type="entry name" value="Primosome_PriB/ssb"/>
</dbReference>
<dbReference type="InterPro" id="IPR011344">
    <property type="entry name" value="ssDNA-bd"/>
</dbReference>
<dbReference type="NCBIfam" id="TIGR00621">
    <property type="entry name" value="ssb"/>
    <property type="match status" value="2"/>
</dbReference>
<dbReference type="PANTHER" id="PTHR10302">
    <property type="entry name" value="SINGLE-STRANDED DNA-BINDING PROTEIN"/>
    <property type="match status" value="1"/>
</dbReference>
<dbReference type="PANTHER" id="PTHR10302:SF27">
    <property type="entry name" value="SINGLE-STRANDED DNA-BINDING PROTEIN"/>
    <property type="match status" value="1"/>
</dbReference>
<dbReference type="Pfam" id="PF00436">
    <property type="entry name" value="SSB"/>
    <property type="match status" value="2"/>
</dbReference>
<dbReference type="SUPFAM" id="SSF50249">
    <property type="entry name" value="Nucleic acid-binding proteins"/>
    <property type="match status" value="2"/>
</dbReference>
<dbReference type="PROSITE" id="PS50935">
    <property type="entry name" value="SSB"/>
    <property type="match status" value="2"/>
</dbReference>
<name>SSB_THET8</name>
<protein>
    <recommendedName>
        <fullName evidence="1">Single-stranded DNA-binding protein</fullName>
        <shortName evidence="1">SSB</shortName>
    </recommendedName>
</protein>
<organism>
    <name type="scientific">Thermus thermophilus (strain ATCC 27634 / DSM 579 / HB8)</name>
    <dbReference type="NCBI Taxonomy" id="300852"/>
    <lineage>
        <taxon>Bacteria</taxon>
        <taxon>Thermotogati</taxon>
        <taxon>Deinococcota</taxon>
        <taxon>Deinococci</taxon>
        <taxon>Thermales</taxon>
        <taxon>Thermaceae</taxon>
        <taxon>Thermus</taxon>
    </lineage>
</organism>
<accession>Q5SLP9</accession>
<accession>Q70M05</accession>
<sequence>MARGLNRVFLIGALATRPDMRYTPAGLAILDLTLAGQDLLLSDNGGEREVSWYHRVRLLGRQAEMWGDLLDQGQLVFVEGRLEYRQWEREGERRSELQIRADFLDPLDDRGKERAEDSRGQPRLRAALNQVFLMGNLTRDPELRYTPQGTAVARLGLAVNERRQGAEERTHFVEVQAWRDLAEWAAELRKGDGLFVIGRLVNDSWTSSSGERRFQTRVEALRLERPTRGPAQAGGSRSREVQTGGVDIDEGLEDFPPEEELPF</sequence>
<gene>
    <name type="primary">ssb</name>
    <name type="ordered locus">TTHA0244</name>
</gene>
<keyword id="KW-0002">3D-structure</keyword>
<keyword id="KW-0227">DNA damage</keyword>
<keyword id="KW-0233">DNA recombination</keyword>
<keyword id="KW-0234">DNA repair</keyword>
<keyword id="KW-0235">DNA replication</keyword>
<keyword id="KW-0238">DNA-binding</keyword>
<keyword id="KW-1185">Reference proteome</keyword>
<keyword id="KW-0677">Repeat</keyword>
<comment type="function">
    <text evidence="1">Plays an important role in DNA replication, recombination and repair. Binds to ssDNA and to an array of partner proteins to recruit them to their sites of action during DNA metabolism.</text>
</comment>
<comment type="subunit">
    <text evidence="3">Homodimer.</text>
</comment>
<proteinExistence type="evidence at protein level"/>